<protein>
    <recommendedName>
        <fullName evidence="1">Phosphoglucosamine mutase</fullName>
        <ecNumber evidence="1">5.4.2.10</ecNumber>
    </recommendedName>
</protein>
<keyword id="KW-0413">Isomerase</keyword>
<keyword id="KW-0460">Magnesium</keyword>
<keyword id="KW-0479">Metal-binding</keyword>
<keyword id="KW-0597">Phosphoprotein</keyword>
<sequence length="443" mass="48207">MAKYFGTDGIRGEVANSTITVEFTQKLGNAVGSLINQKNYPKFVIVGQDTRSSGGFLKFALVSGLNAAGIDVLDLGVVPTPVVAFMTVKHRAAAGFVITASHNKFTDNGIKLFSSNGFKLDDALEEEVEDMIDGDFIYQPQFKFGSYKILANAIDEYIESIHSRFAKFVNYKGKVVVDCAHGAASHNFEALLDKFGINYVSIASNPDGLNINVGCGATCVSNIKKAVKEQKADLGISLDGDADRIIIVDENGQEIDGDGILNILAQYSDICGGTNGIVGTQMTNMSYENHYRANKIPFIRSKVGDRYVLEDLVKYGYKIGGESSGHVINLNFGTTGDGLFTAIQLLAIFSQAYKPVSEFKLQGELMQQTLINVPLTKKVAREDLQKVASDVNDVEKRLGNRGRVLLRPSGTEPVLRVMVEADDKSLATNEAEYLVEKVKQKLV</sequence>
<proteinExistence type="inferred from homology"/>
<organism>
    <name type="scientific">Francisella tularensis subsp. holarctica (strain OSU18)</name>
    <dbReference type="NCBI Taxonomy" id="393011"/>
    <lineage>
        <taxon>Bacteria</taxon>
        <taxon>Pseudomonadati</taxon>
        <taxon>Pseudomonadota</taxon>
        <taxon>Gammaproteobacteria</taxon>
        <taxon>Thiotrichales</taxon>
        <taxon>Francisellaceae</taxon>
        <taxon>Francisella</taxon>
    </lineage>
</organism>
<dbReference type="EC" id="5.4.2.10" evidence="1"/>
<dbReference type="EMBL" id="CP000437">
    <property type="protein sequence ID" value="ABI83485.1"/>
    <property type="molecule type" value="Genomic_DNA"/>
</dbReference>
<dbReference type="RefSeq" id="WP_003017310.1">
    <property type="nucleotide sequence ID" value="NC_017463.1"/>
</dbReference>
<dbReference type="SMR" id="Q0BK99"/>
<dbReference type="KEGG" id="fth:FTH_1717"/>
<dbReference type="GO" id="GO:0005829">
    <property type="term" value="C:cytosol"/>
    <property type="evidence" value="ECO:0007669"/>
    <property type="project" value="TreeGrafter"/>
</dbReference>
<dbReference type="GO" id="GO:0000287">
    <property type="term" value="F:magnesium ion binding"/>
    <property type="evidence" value="ECO:0007669"/>
    <property type="project" value="UniProtKB-UniRule"/>
</dbReference>
<dbReference type="GO" id="GO:0008966">
    <property type="term" value="F:phosphoglucosamine mutase activity"/>
    <property type="evidence" value="ECO:0007669"/>
    <property type="project" value="UniProtKB-UniRule"/>
</dbReference>
<dbReference type="GO" id="GO:0004615">
    <property type="term" value="F:phosphomannomutase activity"/>
    <property type="evidence" value="ECO:0007669"/>
    <property type="project" value="TreeGrafter"/>
</dbReference>
<dbReference type="GO" id="GO:0005975">
    <property type="term" value="P:carbohydrate metabolic process"/>
    <property type="evidence" value="ECO:0007669"/>
    <property type="project" value="InterPro"/>
</dbReference>
<dbReference type="GO" id="GO:0009252">
    <property type="term" value="P:peptidoglycan biosynthetic process"/>
    <property type="evidence" value="ECO:0007669"/>
    <property type="project" value="TreeGrafter"/>
</dbReference>
<dbReference type="GO" id="GO:0006048">
    <property type="term" value="P:UDP-N-acetylglucosamine biosynthetic process"/>
    <property type="evidence" value="ECO:0007669"/>
    <property type="project" value="TreeGrafter"/>
</dbReference>
<dbReference type="CDD" id="cd05802">
    <property type="entry name" value="GlmM"/>
    <property type="match status" value="1"/>
</dbReference>
<dbReference type="FunFam" id="3.30.310.50:FF:000001">
    <property type="entry name" value="Phosphoglucosamine mutase"/>
    <property type="match status" value="1"/>
</dbReference>
<dbReference type="FunFam" id="3.40.120.10:FF:000001">
    <property type="entry name" value="Phosphoglucosamine mutase"/>
    <property type="match status" value="1"/>
</dbReference>
<dbReference type="FunFam" id="3.40.120.10:FF:000003">
    <property type="entry name" value="Phosphoglucosamine mutase"/>
    <property type="match status" value="1"/>
</dbReference>
<dbReference type="Gene3D" id="3.40.120.10">
    <property type="entry name" value="Alpha-D-Glucose-1,6-Bisphosphate, subunit A, domain 3"/>
    <property type="match status" value="3"/>
</dbReference>
<dbReference type="Gene3D" id="3.30.310.50">
    <property type="entry name" value="Alpha-D-phosphohexomutase, C-terminal domain"/>
    <property type="match status" value="1"/>
</dbReference>
<dbReference type="HAMAP" id="MF_01554_B">
    <property type="entry name" value="GlmM_B"/>
    <property type="match status" value="1"/>
</dbReference>
<dbReference type="InterPro" id="IPR005844">
    <property type="entry name" value="A-D-PHexomutase_a/b/a-I"/>
</dbReference>
<dbReference type="InterPro" id="IPR016055">
    <property type="entry name" value="A-D-PHexomutase_a/b/a-I/II/III"/>
</dbReference>
<dbReference type="InterPro" id="IPR005845">
    <property type="entry name" value="A-D-PHexomutase_a/b/a-II"/>
</dbReference>
<dbReference type="InterPro" id="IPR005846">
    <property type="entry name" value="A-D-PHexomutase_a/b/a-III"/>
</dbReference>
<dbReference type="InterPro" id="IPR005843">
    <property type="entry name" value="A-D-PHexomutase_C"/>
</dbReference>
<dbReference type="InterPro" id="IPR036900">
    <property type="entry name" value="A-D-PHexomutase_C_sf"/>
</dbReference>
<dbReference type="InterPro" id="IPR005841">
    <property type="entry name" value="Alpha-D-phosphohexomutase_SF"/>
</dbReference>
<dbReference type="InterPro" id="IPR006352">
    <property type="entry name" value="GlmM_bact"/>
</dbReference>
<dbReference type="InterPro" id="IPR050060">
    <property type="entry name" value="Phosphoglucosamine_mutase"/>
</dbReference>
<dbReference type="NCBIfam" id="TIGR01455">
    <property type="entry name" value="glmM"/>
    <property type="match status" value="1"/>
</dbReference>
<dbReference type="NCBIfam" id="NF008139">
    <property type="entry name" value="PRK10887.1"/>
    <property type="match status" value="1"/>
</dbReference>
<dbReference type="PANTHER" id="PTHR42946:SF1">
    <property type="entry name" value="PHOSPHOGLUCOMUTASE (ALPHA-D-GLUCOSE-1,6-BISPHOSPHATE-DEPENDENT)"/>
    <property type="match status" value="1"/>
</dbReference>
<dbReference type="PANTHER" id="PTHR42946">
    <property type="entry name" value="PHOSPHOHEXOSE MUTASE"/>
    <property type="match status" value="1"/>
</dbReference>
<dbReference type="Pfam" id="PF02878">
    <property type="entry name" value="PGM_PMM_I"/>
    <property type="match status" value="1"/>
</dbReference>
<dbReference type="Pfam" id="PF02879">
    <property type="entry name" value="PGM_PMM_II"/>
    <property type="match status" value="1"/>
</dbReference>
<dbReference type="Pfam" id="PF02880">
    <property type="entry name" value="PGM_PMM_III"/>
    <property type="match status" value="1"/>
</dbReference>
<dbReference type="Pfam" id="PF00408">
    <property type="entry name" value="PGM_PMM_IV"/>
    <property type="match status" value="1"/>
</dbReference>
<dbReference type="PRINTS" id="PR00509">
    <property type="entry name" value="PGMPMM"/>
</dbReference>
<dbReference type="SUPFAM" id="SSF55957">
    <property type="entry name" value="Phosphoglucomutase, C-terminal domain"/>
    <property type="match status" value="1"/>
</dbReference>
<dbReference type="SUPFAM" id="SSF53738">
    <property type="entry name" value="Phosphoglucomutase, first 3 domains"/>
    <property type="match status" value="3"/>
</dbReference>
<accession>Q0BK99</accession>
<feature type="chain" id="PRO_0000301314" description="Phosphoglucosamine mutase">
    <location>
        <begin position="1"/>
        <end position="443"/>
    </location>
</feature>
<feature type="active site" description="Phosphoserine intermediate" evidence="1">
    <location>
        <position position="101"/>
    </location>
</feature>
<feature type="binding site" description="via phosphate group" evidence="1">
    <location>
        <position position="101"/>
    </location>
    <ligand>
        <name>Mg(2+)</name>
        <dbReference type="ChEBI" id="CHEBI:18420"/>
    </ligand>
</feature>
<feature type="binding site" evidence="1">
    <location>
        <position position="239"/>
    </location>
    <ligand>
        <name>Mg(2+)</name>
        <dbReference type="ChEBI" id="CHEBI:18420"/>
    </ligand>
</feature>
<feature type="binding site" evidence="1">
    <location>
        <position position="241"/>
    </location>
    <ligand>
        <name>Mg(2+)</name>
        <dbReference type="ChEBI" id="CHEBI:18420"/>
    </ligand>
</feature>
<feature type="binding site" evidence="1">
    <location>
        <position position="243"/>
    </location>
    <ligand>
        <name>Mg(2+)</name>
        <dbReference type="ChEBI" id="CHEBI:18420"/>
    </ligand>
</feature>
<feature type="modified residue" description="Phosphoserine" evidence="1">
    <location>
        <position position="101"/>
    </location>
</feature>
<gene>
    <name evidence="1" type="primary">glmM</name>
    <name type="ordered locus">FTH_1717</name>
</gene>
<reference key="1">
    <citation type="journal article" date="2006" name="J. Bacteriol.">
        <title>Chromosome rearrangement and diversification of Francisella tularensis revealed by the type B (OSU18) genome sequence.</title>
        <authorList>
            <person name="Petrosino J.F."/>
            <person name="Xiang Q."/>
            <person name="Karpathy S.E."/>
            <person name="Jiang H."/>
            <person name="Yerrapragada S."/>
            <person name="Liu Y."/>
            <person name="Gioia J."/>
            <person name="Hemphill L."/>
            <person name="Gonzalez A."/>
            <person name="Raghavan T.M."/>
            <person name="Uzman A."/>
            <person name="Fox G.E."/>
            <person name="Highlander S."/>
            <person name="Reichard M."/>
            <person name="Morton R.J."/>
            <person name="Clinkenbeard K.D."/>
            <person name="Weinstock G.M."/>
        </authorList>
    </citation>
    <scope>NUCLEOTIDE SEQUENCE [LARGE SCALE GENOMIC DNA]</scope>
    <source>
        <strain>OSU18</strain>
    </source>
</reference>
<name>GLMM_FRATO</name>
<comment type="function">
    <text evidence="1">Catalyzes the conversion of glucosamine-6-phosphate to glucosamine-1-phosphate.</text>
</comment>
<comment type="catalytic activity">
    <reaction evidence="1">
        <text>alpha-D-glucosamine 1-phosphate = D-glucosamine 6-phosphate</text>
        <dbReference type="Rhea" id="RHEA:23424"/>
        <dbReference type="ChEBI" id="CHEBI:58516"/>
        <dbReference type="ChEBI" id="CHEBI:58725"/>
        <dbReference type="EC" id="5.4.2.10"/>
    </reaction>
</comment>
<comment type="cofactor">
    <cofactor evidence="1">
        <name>Mg(2+)</name>
        <dbReference type="ChEBI" id="CHEBI:18420"/>
    </cofactor>
    <text evidence="1">Binds 1 Mg(2+) ion per subunit.</text>
</comment>
<comment type="PTM">
    <text evidence="1">Activated by phosphorylation.</text>
</comment>
<comment type="similarity">
    <text evidence="1">Belongs to the phosphohexose mutase family.</text>
</comment>
<evidence type="ECO:0000255" key="1">
    <source>
        <dbReference type="HAMAP-Rule" id="MF_01554"/>
    </source>
</evidence>